<gene>
    <name evidence="1" type="primary">purH</name>
    <name type="ordered locus">Mjls_4699</name>
</gene>
<reference key="1">
    <citation type="submission" date="2007-02" db="EMBL/GenBank/DDBJ databases">
        <title>Complete sequence of Mycobacterium sp. JLS.</title>
        <authorList>
            <consortium name="US DOE Joint Genome Institute"/>
            <person name="Copeland A."/>
            <person name="Lucas S."/>
            <person name="Lapidus A."/>
            <person name="Barry K."/>
            <person name="Detter J.C."/>
            <person name="Glavina del Rio T."/>
            <person name="Hammon N."/>
            <person name="Israni S."/>
            <person name="Dalin E."/>
            <person name="Tice H."/>
            <person name="Pitluck S."/>
            <person name="Chain P."/>
            <person name="Malfatti S."/>
            <person name="Shin M."/>
            <person name="Vergez L."/>
            <person name="Schmutz J."/>
            <person name="Larimer F."/>
            <person name="Land M."/>
            <person name="Hauser L."/>
            <person name="Kyrpides N."/>
            <person name="Mikhailova N."/>
            <person name="Miller C.D."/>
            <person name="Anderson A.J."/>
            <person name="Sims R.C."/>
            <person name="Richardson P."/>
        </authorList>
    </citation>
    <scope>NUCLEOTIDE SEQUENCE [LARGE SCALE GENOMIC DNA]</scope>
    <source>
        <strain>JLS</strain>
    </source>
</reference>
<feature type="chain" id="PRO_1000018911" description="Bifunctional purine biosynthesis protein PurH">
    <location>
        <begin position="1"/>
        <end position="527"/>
    </location>
</feature>
<feature type="domain" description="MGS-like" evidence="2">
    <location>
        <begin position="8"/>
        <end position="156"/>
    </location>
</feature>
<organism>
    <name type="scientific">Mycobacterium sp. (strain JLS)</name>
    <dbReference type="NCBI Taxonomy" id="164757"/>
    <lineage>
        <taxon>Bacteria</taxon>
        <taxon>Bacillati</taxon>
        <taxon>Actinomycetota</taxon>
        <taxon>Actinomycetes</taxon>
        <taxon>Mycobacteriales</taxon>
        <taxon>Mycobacteriaceae</taxon>
        <taxon>Mycobacterium</taxon>
    </lineage>
</organism>
<comment type="catalytic activity">
    <reaction evidence="1">
        <text>(6R)-10-formyltetrahydrofolate + 5-amino-1-(5-phospho-beta-D-ribosyl)imidazole-4-carboxamide = 5-formamido-1-(5-phospho-D-ribosyl)imidazole-4-carboxamide + (6S)-5,6,7,8-tetrahydrofolate</text>
        <dbReference type="Rhea" id="RHEA:22192"/>
        <dbReference type="ChEBI" id="CHEBI:57453"/>
        <dbReference type="ChEBI" id="CHEBI:58467"/>
        <dbReference type="ChEBI" id="CHEBI:58475"/>
        <dbReference type="ChEBI" id="CHEBI:195366"/>
        <dbReference type="EC" id="2.1.2.3"/>
    </reaction>
</comment>
<comment type="catalytic activity">
    <reaction evidence="1">
        <text>IMP + H2O = 5-formamido-1-(5-phospho-D-ribosyl)imidazole-4-carboxamide</text>
        <dbReference type="Rhea" id="RHEA:18445"/>
        <dbReference type="ChEBI" id="CHEBI:15377"/>
        <dbReference type="ChEBI" id="CHEBI:58053"/>
        <dbReference type="ChEBI" id="CHEBI:58467"/>
        <dbReference type="EC" id="3.5.4.10"/>
    </reaction>
</comment>
<comment type="pathway">
    <text evidence="1">Purine metabolism; IMP biosynthesis via de novo pathway; 5-formamido-1-(5-phospho-D-ribosyl)imidazole-4-carboxamide from 5-amino-1-(5-phospho-D-ribosyl)imidazole-4-carboxamide (10-formyl THF route): step 1/1.</text>
</comment>
<comment type="pathway">
    <text evidence="1">Purine metabolism; IMP biosynthesis via de novo pathway; IMP from 5-formamido-1-(5-phospho-D-ribosyl)imidazole-4-carboxamide: step 1/1.</text>
</comment>
<comment type="domain">
    <text evidence="1">The IMP cyclohydrolase activity resides in the N-terminal region.</text>
</comment>
<comment type="similarity">
    <text evidence="1">Belongs to the PurH family.</text>
</comment>
<name>PUR9_MYCSJ</name>
<dbReference type="EC" id="2.1.2.3" evidence="1"/>
<dbReference type="EC" id="3.5.4.10" evidence="1"/>
<dbReference type="EMBL" id="CP000580">
    <property type="protein sequence ID" value="ABO00465.1"/>
    <property type="molecule type" value="Genomic_DNA"/>
</dbReference>
<dbReference type="SMR" id="A3Q5N7"/>
<dbReference type="KEGG" id="mjl:Mjls_4699"/>
<dbReference type="HOGENOM" id="CLU_016316_5_2_11"/>
<dbReference type="BioCyc" id="MSP164757:G1G8C-4742-MONOMER"/>
<dbReference type="UniPathway" id="UPA00074">
    <property type="reaction ID" value="UER00133"/>
</dbReference>
<dbReference type="UniPathway" id="UPA00074">
    <property type="reaction ID" value="UER00135"/>
</dbReference>
<dbReference type="GO" id="GO:0005829">
    <property type="term" value="C:cytosol"/>
    <property type="evidence" value="ECO:0007669"/>
    <property type="project" value="TreeGrafter"/>
</dbReference>
<dbReference type="GO" id="GO:0003937">
    <property type="term" value="F:IMP cyclohydrolase activity"/>
    <property type="evidence" value="ECO:0007669"/>
    <property type="project" value="UniProtKB-UniRule"/>
</dbReference>
<dbReference type="GO" id="GO:0004643">
    <property type="term" value="F:phosphoribosylaminoimidazolecarboxamide formyltransferase activity"/>
    <property type="evidence" value="ECO:0007669"/>
    <property type="project" value="UniProtKB-UniRule"/>
</dbReference>
<dbReference type="GO" id="GO:0006189">
    <property type="term" value="P:'de novo' IMP biosynthetic process"/>
    <property type="evidence" value="ECO:0007669"/>
    <property type="project" value="UniProtKB-UniRule"/>
</dbReference>
<dbReference type="CDD" id="cd01421">
    <property type="entry name" value="IMPCH"/>
    <property type="match status" value="1"/>
</dbReference>
<dbReference type="FunFam" id="3.40.140.20:FF:000001">
    <property type="entry name" value="Bifunctional purine biosynthesis protein PurH"/>
    <property type="match status" value="1"/>
</dbReference>
<dbReference type="FunFam" id="3.40.140.20:FF:000002">
    <property type="entry name" value="Bifunctional purine biosynthesis protein PurH"/>
    <property type="match status" value="1"/>
</dbReference>
<dbReference type="FunFam" id="3.40.50.1380:FF:000001">
    <property type="entry name" value="Bifunctional purine biosynthesis protein PurH"/>
    <property type="match status" value="1"/>
</dbReference>
<dbReference type="Gene3D" id="3.40.140.20">
    <property type="match status" value="2"/>
</dbReference>
<dbReference type="Gene3D" id="3.40.50.1380">
    <property type="entry name" value="Methylglyoxal synthase-like domain"/>
    <property type="match status" value="1"/>
</dbReference>
<dbReference type="HAMAP" id="MF_00139">
    <property type="entry name" value="PurH"/>
    <property type="match status" value="1"/>
</dbReference>
<dbReference type="InterPro" id="IPR024051">
    <property type="entry name" value="AICAR_Tfase_dup_dom_sf"/>
</dbReference>
<dbReference type="InterPro" id="IPR016193">
    <property type="entry name" value="Cytidine_deaminase-like"/>
</dbReference>
<dbReference type="InterPro" id="IPR011607">
    <property type="entry name" value="MGS-like_dom"/>
</dbReference>
<dbReference type="InterPro" id="IPR036914">
    <property type="entry name" value="MGS-like_dom_sf"/>
</dbReference>
<dbReference type="InterPro" id="IPR002695">
    <property type="entry name" value="PurH-like"/>
</dbReference>
<dbReference type="NCBIfam" id="NF002049">
    <property type="entry name" value="PRK00881.1"/>
    <property type="match status" value="1"/>
</dbReference>
<dbReference type="NCBIfam" id="TIGR00355">
    <property type="entry name" value="purH"/>
    <property type="match status" value="1"/>
</dbReference>
<dbReference type="PANTHER" id="PTHR11692:SF0">
    <property type="entry name" value="BIFUNCTIONAL PURINE BIOSYNTHESIS PROTEIN ATIC"/>
    <property type="match status" value="1"/>
</dbReference>
<dbReference type="PANTHER" id="PTHR11692">
    <property type="entry name" value="BIFUNCTIONAL PURINE BIOSYNTHESIS PROTEIN PURH"/>
    <property type="match status" value="1"/>
</dbReference>
<dbReference type="Pfam" id="PF01808">
    <property type="entry name" value="AICARFT_IMPCHas"/>
    <property type="match status" value="1"/>
</dbReference>
<dbReference type="Pfam" id="PF02142">
    <property type="entry name" value="MGS"/>
    <property type="match status" value="1"/>
</dbReference>
<dbReference type="PIRSF" id="PIRSF000414">
    <property type="entry name" value="AICARFT_IMPCHas"/>
    <property type="match status" value="1"/>
</dbReference>
<dbReference type="SMART" id="SM00798">
    <property type="entry name" value="AICARFT_IMPCHas"/>
    <property type="match status" value="1"/>
</dbReference>
<dbReference type="SMART" id="SM00851">
    <property type="entry name" value="MGS"/>
    <property type="match status" value="1"/>
</dbReference>
<dbReference type="SUPFAM" id="SSF53927">
    <property type="entry name" value="Cytidine deaminase-like"/>
    <property type="match status" value="1"/>
</dbReference>
<dbReference type="SUPFAM" id="SSF52335">
    <property type="entry name" value="Methylglyoxal synthase-like"/>
    <property type="match status" value="1"/>
</dbReference>
<dbReference type="PROSITE" id="PS51855">
    <property type="entry name" value="MGS"/>
    <property type="match status" value="1"/>
</dbReference>
<sequence length="527" mass="55547">MSGDQGQAGAKRPIRRALISVYDKSGLIDLARGLHEAGVDIVSTGSTAKTIADKGIPVTPVEFVTGFPEVLDGRVKTLHPHIHAGLLADTRKPEHVEALAKLGIAPFDLVVVNLYPFSETVESGASVDECVEQIDIGGPSMVRAAAKNHPSVAVVVEPNGYDGVLAAVRTGGFTLAERKILASLAFRHTAEYDVAVASWMGSTLAPEEPAQKLPAWVGGTWRRAAVLRYGENPHQQAALYRDATAWPGLAQAEQLHGKEMSYNNYTDADAAWRAAFDHEEICVAIIKHANPCGIAISSVSVADAHRKAHECDPLSAFGGVIATNSSVSVEMAETVADIFTEVIVAPAYEPGAVEILSRKKNIRILLAAQPPTTGTELRPISGGLLLQQRDALDADGDDPVNWTLATGEPADPATLANLKFAWRSCRAVKSNAIVVVADGATVGVGMGQVNRVDAARLAVQRAGDRVRGAIAASDAFFPFPDGLETLTEAGVKAIVHPGGSMRDDVVTEAAAKAGISLYLTGARHFAH</sequence>
<proteinExistence type="inferred from homology"/>
<keyword id="KW-0378">Hydrolase</keyword>
<keyword id="KW-0511">Multifunctional enzyme</keyword>
<keyword id="KW-0658">Purine biosynthesis</keyword>
<keyword id="KW-0808">Transferase</keyword>
<accession>A3Q5N7</accession>
<evidence type="ECO:0000255" key="1">
    <source>
        <dbReference type="HAMAP-Rule" id="MF_00139"/>
    </source>
</evidence>
<evidence type="ECO:0000255" key="2">
    <source>
        <dbReference type="PROSITE-ProRule" id="PRU01202"/>
    </source>
</evidence>
<protein>
    <recommendedName>
        <fullName evidence="1">Bifunctional purine biosynthesis protein PurH</fullName>
    </recommendedName>
    <domain>
        <recommendedName>
            <fullName evidence="1">Phosphoribosylaminoimidazolecarboxamide formyltransferase</fullName>
            <ecNumber evidence="1">2.1.2.3</ecNumber>
        </recommendedName>
        <alternativeName>
            <fullName evidence="1">AICAR transformylase</fullName>
        </alternativeName>
    </domain>
    <domain>
        <recommendedName>
            <fullName evidence="1">IMP cyclohydrolase</fullName>
            <ecNumber evidence="1">3.5.4.10</ecNumber>
        </recommendedName>
        <alternativeName>
            <fullName evidence="1">ATIC</fullName>
        </alternativeName>
        <alternativeName>
            <fullName evidence="1">IMP synthase</fullName>
        </alternativeName>
        <alternativeName>
            <fullName evidence="1">Inosinicase</fullName>
        </alternativeName>
    </domain>
</protein>